<name>CHRB_DROME</name>
<comment type="function">
    <text evidence="3 4 5">Inhibits cell growth by regulating the Tor pathway upstream of the Tsc1-Tsc2 complex and downstream of Akt1. Acts as a cell death activator during head development.</text>
</comment>
<comment type="subcellular location">
    <subcellularLocation>
        <location evidence="1">Cytoplasm</location>
    </subcellularLocation>
</comment>
<comment type="developmental stage">
    <text evidence="5">Expression peaks 2-8 hours after egg laying. Expressed in the dorsal domains of gastrulation stage embryos. During mid-embryonic development, expressed in the central nervous system, the three thoracic segments and the cardiac precursor cells.</text>
</comment>
<comment type="induction">
    <text evidence="3 5">Expression is controlled by homeobox transcription factors. At larval stages, induced by starvation, and mildly by hypoxia in midgut but not fat body.</text>
</comment>
<comment type="similarity">
    <text evidence="6">Belongs to the DDIT4 family.</text>
</comment>
<proteinExistence type="evidence at transcript level"/>
<reference key="1">
    <citation type="submission" date="2000-01" db="EMBL/GenBank/DDBJ databases">
        <title>Characterization of charybde and scylla, two paralogous target genes of Hox and cofactors proteins in Drosophila.</title>
        <authorList>
            <person name="Chauvet S."/>
            <person name="Maurel-Zaffran C."/>
            <person name="Miassod R."/>
            <person name="Jullien N."/>
            <person name="Pradel J."/>
            <person name="Aragnol D."/>
        </authorList>
    </citation>
    <scope>NUCLEOTIDE SEQUENCE [MRNA]</scope>
</reference>
<reference key="2">
    <citation type="journal article" date="2000" name="Science">
        <title>The genome sequence of Drosophila melanogaster.</title>
        <authorList>
            <person name="Adams M.D."/>
            <person name="Celniker S.E."/>
            <person name="Holt R.A."/>
            <person name="Evans C.A."/>
            <person name="Gocayne J.D."/>
            <person name="Amanatides P.G."/>
            <person name="Scherer S.E."/>
            <person name="Li P.W."/>
            <person name="Hoskins R.A."/>
            <person name="Galle R.F."/>
            <person name="George R.A."/>
            <person name="Lewis S.E."/>
            <person name="Richards S."/>
            <person name="Ashburner M."/>
            <person name="Henderson S.N."/>
            <person name="Sutton G.G."/>
            <person name="Wortman J.R."/>
            <person name="Yandell M.D."/>
            <person name="Zhang Q."/>
            <person name="Chen L.X."/>
            <person name="Brandon R.C."/>
            <person name="Rogers Y.-H.C."/>
            <person name="Blazej R.G."/>
            <person name="Champe M."/>
            <person name="Pfeiffer B.D."/>
            <person name="Wan K.H."/>
            <person name="Doyle C."/>
            <person name="Baxter E.G."/>
            <person name="Helt G."/>
            <person name="Nelson C.R."/>
            <person name="Miklos G.L.G."/>
            <person name="Abril J.F."/>
            <person name="Agbayani A."/>
            <person name="An H.-J."/>
            <person name="Andrews-Pfannkoch C."/>
            <person name="Baldwin D."/>
            <person name="Ballew R.M."/>
            <person name="Basu A."/>
            <person name="Baxendale J."/>
            <person name="Bayraktaroglu L."/>
            <person name="Beasley E.M."/>
            <person name="Beeson K.Y."/>
            <person name="Benos P.V."/>
            <person name="Berman B.P."/>
            <person name="Bhandari D."/>
            <person name="Bolshakov S."/>
            <person name="Borkova D."/>
            <person name="Botchan M.R."/>
            <person name="Bouck J."/>
            <person name="Brokstein P."/>
            <person name="Brottier P."/>
            <person name="Burtis K.C."/>
            <person name="Busam D.A."/>
            <person name="Butler H."/>
            <person name="Cadieu E."/>
            <person name="Center A."/>
            <person name="Chandra I."/>
            <person name="Cherry J.M."/>
            <person name="Cawley S."/>
            <person name="Dahlke C."/>
            <person name="Davenport L.B."/>
            <person name="Davies P."/>
            <person name="de Pablos B."/>
            <person name="Delcher A."/>
            <person name="Deng Z."/>
            <person name="Mays A.D."/>
            <person name="Dew I."/>
            <person name="Dietz S.M."/>
            <person name="Dodson K."/>
            <person name="Doup L.E."/>
            <person name="Downes M."/>
            <person name="Dugan-Rocha S."/>
            <person name="Dunkov B.C."/>
            <person name="Dunn P."/>
            <person name="Durbin K.J."/>
            <person name="Evangelista C.C."/>
            <person name="Ferraz C."/>
            <person name="Ferriera S."/>
            <person name="Fleischmann W."/>
            <person name="Fosler C."/>
            <person name="Gabrielian A.E."/>
            <person name="Garg N.S."/>
            <person name="Gelbart W.M."/>
            <person name="Glasser K."/>
            <person name="Glodek A."/>
            <person name="Gong F."/>
            <person name="Gorrell J.H."/>
            <person name="Gu Z."/>
            <person name="Guan P."/>
            <person name="Harris M."/>
            <person name="Harris N.L."/>
            <person name="Harvey D.A."/>
            <person name="Heiman T.J."/>
            <person name="Hernandez J.R."/>
            <person name="Houck J."/>
            <person name="Hostin D."/>
            <person name="Houston K.A."/>
            <person name="Howland T.J."/>
            <person name="Wei M.-H."/>
            <person name="Ibegwam C."/>
            <person name="Jalali M."/>
            <person name="Kalush F."/>
            <person name="Karpen G.H."/>
            <person name="Ke Z."/>
            <person name="Kennison J.A."/>
            <person name="Ketchum K.A."/>
            <person name="Kimmel B.E."/>
            <person name="Kodira C.D."/>
            <person name="Kraft C.L."/>
            <person name="Kravitz S."/>
            <person name="Kulp D."/>
            <person name="Lai Z."/>
            <person name="Lasko P."/>
            <person name="Lei Y."/>
            <person name="Levitsky A.A."/>
            <person name="Li J.H."/>
            <person name="Li Z."/>
            <person name="Liang Y."/>
            <person name="Lin X."/>
            <person name="Liu X."/>
            <person name="Mattei B."/>
            <person name="McIntosh T.C."/>
            <person name="McLeod M.P."/>
            <person name="McPherson D."/>
            <person name="Merkulov G."/>
            <person name="Milshina N.V."/>
            <person name="Mobarry C."/>
            <person name="Morris J."/>
            <person name="Moshrefi A."/>
            <person name="Mount S.M."/>
            <person name="Moy M."/>
            <person name="Murphy B."/>
            <person name="Murphy L."/>
            <person name="Muzny D.M."/>
            <person name="Nelson D.L."/>
            <person name="Nelson D.R."/>
            <person name="Nelson K.A."/>
            <person name="Nixon K."/>
            <person name="Nusskern D.R."/>
            <person name="Pacleb J.M."/>
            <person name="Palazzolo M."/>
            <person name="Pittman G.S."/>
            <person name="Pan S."/>
            <person name="Pollard J."/>
            <person name="Puri V."/>
            <person name="Reese M.G."/>
            <person name="Reinert K."/>
            <person name="Remington K."/>
            <person name="Saunders R.D.C."/>
            <person name="Scheeler F."/>
            <person name="Shen H."/>
            <person name="Shue B.C."/>
            <person name="Siden-Kiamos I."/>
            <person name="Simpson M."/>
            <person name="Skupski M.P."/>
            <person name="Smith T.J."/>
            <person name="Spier E."/>
            <person name="Spradling A.C."/>
            <person name="Stapleton M."/>
            <person name="Strong R."/>
            <person name="Sun E."/>
            <person name="Svirskas R."/>
            <person name="Tector C."/>
            <person name="Turner R."/>
            <person name="Venter E."/>
            <person name="Wang A.H."/>
            <person name="Wang X."/>
            <person name="Wang Z.-Y."/>
            <person name="Wassarman D.A."/>
            <person name="Weinstock G.M."/>
            <person name="Weissenbach J."/>
            <person name="Williams S.M."/>
            <person name="Woodage T."/>
            <person name="Worley K.C."/>
            <person name="Wu D."/>
            <person name="Yang S."/>
            <person name="Yao Q.A."/>
            <person name="Ye J."/>
            <person name="Yeh R.-F."/>
            <person name="Zaveri J.S."/>
            <person name="Zhan M."/>
            <person name="Zhang G."/>
            <person name="Zhao Q."/>
            <person name="Zheng L."/>
            <person name="Zheng X.H."/>
            <person name="Zhong F.N."/>
            <person name="Zhong W."/>
            <person name="Zhou X."/>
            <person name="Zhu S.C."/>
            <person name="Zhu X."/>
            <person name="Smith H.O."/>
            <person name="Gibbs R.A."/>
            <person name="Myers E.W."/>
            <person name="Rubin G.M."/>
            <person name="Venter J.C."/>
        </authorList>
    </citation>
    <scope>NUCLEOTIDE SEQUENCE [LARGE SCALE GENOMIC DNA]</scope>
    <source>
        <strain>Berkeley</strain>
    </source>
</reference>
<reference key="3">
    <citation type="journal article" date="2002" name="Genome Biol.">
        <title>Annotation of the Drosophila melanogaster euchromatic genome: a systematic review.</title>
        <authorList>
            <person name="Misra S."/>
            <person name="Crosby M.A."/>
            <person name="Mungall C.J."/>
            <person name="Matthews B.B."/>
            <person name="Campbell K.S."/>
            <person name="Hradecky P."/>
            <person name="Huang Y."/>
            <person name="Kaminker J.S."/>
            <person name="Millburn G.H."/>
            <person name="Prochnik S.E."/>
            <person name="Smith C.D."/>
            <person name="Tupy J.L."/>
            <person name="Whitfield E.J."/>
            <person name="Bayraktaroglu L."/>
            <person name="Berman B.P."/>
            <person name="Bettencourt B.R."/>
            <person name="Celniker S.E."/>
            <person name="de Grey A.D.N.J."/>
            <person name="Drysdale R.A."/>
            <person name="Harris N.L."/>
            <person name="Richter J."/>
            <person name="Russo S."/>
            <person name="Schroeder A.J."/>
            <person name="Shu S.Q."/>
            <person name="Stapleton M."/>
            <person name="Yamada C."/>
            <person name="Ashburner M."/>
            <person name="Gelbart W.M."/>
            <person name="Rubin G.M."/>
            <person name="Lewis S.E."/>
        </authorList>
    </citation>
    <scope>GENOME REANNOTATION</scope>
    <source>
        <strain>Berkeley</strain>
    </source>
</reference>
<reference key="4">
    <citation type="journal article" date="2002" name="Genome Biol.">
        <title>A Drosophila full-length cDNA resource.</title>
        <authorList>
            <person name="Stapleton M."/>
            <person name="Carlson J.W."/>
            <person name="Brokstein P."/>
            <person name="Yu C."/>
            <person name="Champe M."/>
            <person name="George R.A."/>
            <person name="Guarin H."/>
            <person name="Kronmiller B."/>
            <person name="Pacleb J.M."/>
            <person name="Park S."/>
            <person name="Wan K.H."/>
            <person name="Rubin G.M."/>
            <person name="Celniker S.E."/>
        </authorList>
    </citation>
    <scope>NUCLEOTIDE SEQUENCE [LARGE SCALE MRNA]</scope>
    <source>
        <strain>Berkeley</strain>
        <tissue>Embryo</tissue>
    </source>
</reference>
<reference key="5">
    <citation type="journal article" date="2002" name="Mol. Cell">
        <title>REDD1, a developmentally regulated transcriptional target of p63 and p53, links p63 to regulation of reactive oxygen species.</title>
        <authorList>
            <person name="Ellisen L.W."/>
            <person name="Ramsayer K.D."/>
            <person name="Johannessen C.M."/>
            <person name="Yang A."/>
            <person name="Beppu H."/>
            <person name="Minda K."/>
            <person name="Oliner J.D."/>
            <person name="McKeon F."/>
            <person name="Haber D.A."/>
        </authorList>
    </citation>
    <scope>IDENTIFICATION</scope>
</reference>
<reference key="6">
    <citation type="journal article" date="2004" name="Genes Dev.">
        <title>The hypoxia-induced paralogs Scylla and Charybdis inhibit growth by down-regulating S6K activity upstream of TSC in Drosophila.</title>
        <authorList>
            <person name="Reiling J.H."/>
            <person name="Hafen E."/>
        </authorList>
    </citation>
    <scope>FUNCTION</scope>
    <scope>INDUCTION</scope>
</reference>
<reference key="7">
    <citation type="journal article" date="2005" name="J. Biol. Chem.">
        <title>The stress-inducted proteins RTP801 and RTP801L are negative regulators of the mammalian target of rapamycin pathway.</title>
        <authorList>
            <person name="Corradetti M.N."/>
            <person name="Inoki K."/>
            <person name="Guan K.-L."/>
        </authorList>
    </citation>
    <scope>FUNCTION</scope>
</reference>
<reference key="8">
    <citation type="journal article" date="2006" name="Dev. Biol.">
        <title>scylla and charybde, homologues of the human apoptotic gene RTP801, are required for head involution in Drosophila.</title>
        <authorList>
            <person name="Scuderi A."/>
            <person name="Simin K."/>
            <person name="Kazuko S.G."/>
            <person name="Metherall J.E."/>
            <person name="Letsou A."/>
        </authorList>
    </citation>
    <scope>FUNCTION</scope>
    <scope>INDUCTION</scope>
    <scope>DEVELOPMENTAL STAGE</scope>
</reference>
<feature type="chain" id="PRO_0000307209" description="Protein charybde">
    <location>
        <begin position="1"/>
        <end position="299"/>
    </location>
</feature>
<feature type="region of interest" description="Disordered" evidence="2">
    <location>
        <begin position="73"/>
        <end position="103"/>
    </location>
</feature>
<feature type="compositionally biased region" description="Gly residues" evidence="2">
    <location>
        <begin position="84"/>
        <end position="96"/>
    </location>
</feature>
<feature type="sequence conflict" description="In Ref. 1; AAF59840." evidence="6" ref="1">
    <original>C</original>
    <variation>G</variation>
    <location>
        <position position="154"/>
    </location>
</feature>
<protein>
    <recommendedName>
        <fullName>Protein charybde</fullName>
    </recommendedName>
    <alternativeName>
        <fullName>Protein charybdis</fullName>
    </alternativeName>
    <alternativeName>
        <fullName>Protein regulated in development and DNA damage response 1</fullName>
        <shortName>REDD-1</shortName>
    </alternativeName>
</protein>
<organism>
    <name type="scientific">Drosophila melanogaster</name>
    <name type="common">Fruit fly</name>
    <dbReference type="NCBI Taxonomy" id="7227"/>
    <lineage>
        <taxon>Eukaryota</taxon>
        <taxon>Metazoa</taxon>
        <taxon>Ecdysozoa</taxon>
        <taxon>Arthropoda</taxon>
        <taxon>Hexapoda</taxon>
        <taxon>Insecta</taxon>
        <taxon>Pterygota</taxon>
        <taxon>Neoptera</taxon>
        <taxon>Endopterygota</taxon>
        <taxon>Diptera</taxon>
        <taxon>Brachycera</taxon>
        <taxon>Muscomorpha</taxon>
        <taxon>Ephydroidea</taxon>
        <taxon>Drosophilidae</taxon>
        <taxon>Drosophila</taxon>
        <taxon>Sophophora</taxon>
    </lineage>
</organism>
<evidence type="ECO:0000250" key="1"/>
<evidence type="ECO:0000256" key="2">
    <source>
        <dbReference type="SAM" id="MobiDB-lite"/>
    </source>
</evidence>
<evidence type="ECO:0000269" key="3">
    <source>
    </source>
</evidence>
<evidence type="ECO:0000269" key="4">
    <source>
    </source>
</evidence>
<evidence type="ECO:0000269" key="5">
    <source>
    </source>
</evidence>
<evidence type="ECO:0000305" key="6"/>
<keyword id="KW-0053">Apoptosis</keyword>
<keyword id="KW-0963">Cytoplasm</keyword>
<keyword id="KW-0217">Developmental protein</keyword>
<keyword id="KW-1185">Reference proteome</keyword>
<dbReference type="EMBL" id="AF221109">
    <property type="protein sequence ID" value="AAF59840.1"/>
    <property type="molecule type" value="mRNA"/>
</dbReference>
<dbReference type="EMBL" id="AE014296">
    <property type="protein sequence ID" value="AAF50060.2"/>
    <property type="molecule type" value="Genomic_DNA"/>
</dbReference>
<dbReference type="EMBL" id="AY060367">
    <property type="protein sequence ID" value="AAL25406.1"/>
    <property type="molecule type" value="mRNA"/>
</dbReference>
<dbReference type="RefSeq" id="NP_648470.2">
    <property type="nucleotide sequence ID" value="NM_140213.5"/>
</dbReference>
<dbReference type="SMR" id="Q9VTI8"/>
<dbReference type="BioGRID" id="64656">
    <property type="interactions" value="6"/>
</dbReference>
<dbReference type="FunCoup" id="Q9VTI8">
    <property type="interactions" value="67"/>
</dbReference>
<dbReference type="IntAct" id="Q9VTI8">
    <property type="interactions" value="6"/>
</dbReference>
<dbReference type="STRING" id="7227.FBpp0099774"/>
<dbReference type="GlyGen" id="Q9VTI8">
    <property type="glycosylation" value="1 site"/>
</dbReference>
<dbReference type="PaxDb" id="7227-FBpp0304225"/>
<dbReference type="DNASU" id="39284"/>
<dbReference type="EnsemblMetazoa" id="FBtr0076093">
    <property type="protein sequence ID" value="FBpp0099774"/>
    <property type="gene ID" value="FBgn0036165"/>
</dbReference>
<dbReference type="GeneID" id="39284"/>
<dbReference type="KEGG" id="dme:Dmel_CG7533"/>
<dbReference type="AGR" id="FB:FBgn0036165"/>
<dbReference type="CTD" id="39284"/>
<dbReference type="FlyBase" id="FBgn0036165">
    <property type="gene designation" value="chrb"/>
</dbReference>
<dbReference type="VEuPathDB" id="VectorBase:FBgn0036165"/>
<dbReference type="eggNOG" id="ENOG502R3EE">
    <property type="taxonomic scope" value="Eukaryota"/>
</dbReference>
<dbReference type="GeneTree" id="ENSGT00530000063652"/>
<dbReference type="InParanoid" id="Q9VTI8"/>
<dbReference type="OMA" id="KDWQAST"/>
<dbReference type="OrthoDB" id="10018535at2759"/>
<dbReference type="PhylomeDB" id="Q9VTI8"/>
<dbReference type="Reactome" id="R-DME-5628897">
    <property type="pathway name" value="TP53 Regulates Metabolic Genes"/>
</dbReference>
<dbReference type="SignaLink" id="Q9VTI8"/>
<dbReference type="BioGRID-ORCS" id="39284">
    <property type="hits" value="0 hits in 3 CRISPR screens"/>
</dbReference>
<dbReference type="ChiTaRS" id="chrb">
    <property type="organism name" value="fly"/>
</dbReference>
<dbReference type="GenomeRNAi" id="39284"/>
<dbReference type="PRO" id="PR:Q9VTI8"/>
<dbReference type="Proteomes" id="UP000000803">
    <property type="component" value="Chromosome 3L"/>
</dbReference>
<dbReference type="Bgee" id="FBgn0036165">
    <property type="expression patterns" value="Expressed in muscle cell in digestive tract and 322 other cell types or tissues"/>
</dbReference>
<dbReference type="ExpressionAtlas" id="Q9VTI8">
    <property type="expression patterns" value="baseline and differential"/>
</dbReference>
<dbReference type="GO" id="GO:0005737">
    <property type="term" value="C:cytoplasm"/>
    <property type="evidence" value="ECO:0000250"/>
    <property type="project" value="UniProtKB"/>
</dbReference>
<dbReference type="GO" id="GO:0006915">
    <property type="term" value="P:apoptotic process"/>
    <property type="evidence" value="ECO:0000315"/>
    <property type="project" value="UniProtKB"/>
</dbReference>
<dbReference type="GO" id="GO:0008258">
    <property type="term" value="P:head involution"/>
    <property type="evidence" value="ECO:0000315"/>
    <property type="project" value="UniProtKB"/>
</dbReference>
<dbReference type="GO" id="GO:0045926">
    <property type="term" value="P:negative regulation of growth"/>
    <property type="evidence" value="ECO:0000316"/>
    <property type="project" value="FlyBase"/>
</dbReference>
<dbReference type="GO" id="GO:0009968">
    <property type="term" value="P:negative regulation of signal transduction"/>
    <property type="evidence" value="ECO:0007669"/>
    <property type="project" value="InterPro"/>
</dbReference>
<dbReference type="GO" id="GO:0032006">
    <property type="term" value="P:regulation of TOR signaling"/>
    <property type="evidence" value="ECO:0000315"/>
    <property type="project" value="UniProtKB"/>
</dbReference>
<dbReference type="GO" id="GO:0006979">
    <property type="term" value="P:response to oxidative stress"/>
    <property type="evidence" value="ECO:0000315"/>
    <property type="project" value="UniProtKB"/>
</dbReference>
<dbReference type="FunFam" id="3.90.470.40:FF:000003">
    <property type="entry name" value="Charybde, isoform E"/>
    <property type="match status" value="1"/>
</dbReference>
<dbReference type="Gene3D" id="3.90.470.40">
    <property type="entry name" value="RTP801-like"/>
    <property type="match status" value="1"/>
</dbReference>
<dbReference type="InterPro" id="IPR012918">
    <property type="entry name" value="RTP801-like"/>
</dbReference>
<dbReference type="InterPro" id="IPR038281">
    <property type="entry name" value="RTP801-like_C_sf"/>
</dbReference>
<dbReference type="PANTHER" id="PTHR12478">
    <property type="entry name" value="DNA-DAMAGE-INDUCIBLE TRANSCRIPT 4 PROTEIN DDIT4"/>
    <property type="match status" value="1"/>
</dbReference>
<dbReference type="PANTHER" id="PTHR12478:SF16">
    <property type="entry name" value="PROTEIN CHARYBDE-RELATED"/>
    <property type="match status" value="1"/>
</dbReference>
<dbReference type="Pfam" id="PF07809">
    <property type="entry name" value="RTP801_C"/>
    <property type="match status" value="1"/>
</dbReference>
<gene>
    <name type="primary">chrb</name>
    <name type="synonym">char</name>
    <name type="ORF">CG7533</name>
</gene>
<sequence>MKMEVLSVQNHIQGKFGVNKIKDWQASTAPLEEEEELTAGVNGNTAAGEGILDVDVVDGHPASVLHMRQHQALNTRPSATPPSAGGGGPLAGGGSVGMTTPKQATSPVAAASFEAPLSGGSAAAYHHAYMTNVLSSTAQQHHPLPASPLQSTACARFGAADNLDDVSASAVRELSQQLQAQLRDAKRRHLACTEVTLPNDLTQRIAAEIIRMSEREPCGERACTLFIEFESEPNKVKRIAYFKVDPDTVSIFELYLTLRQDKSGWSSLVPQFIKNLTRSNTINISPDFTLTKKKLYSSE</sequence>
<accession>Q9VTI8</accession>
<accession>Q9NHN5</accession>